<protein>
    <recommendedName>
        <fullName evidence="9">tRNA 2-(methylsulfanyl)-N(6)-isopentenyladenosine(37) hydroxylase</fullName>
        <ecNumber evidence="2 3 5">1.14.99.69</ecNumber>
    </recommendedName>
    <alternativeName>
        <fullName evidence="7">2-methylthio-N6-isopentenyladenosine(37)-tRNA monooxygenase</fullName>
    </alternativeName>
    <alternativeName>
        <fullName evidence="8">tRNA-(ms[2]io[6]A37)-hydroxylase</fullName>
    </alternativeName>
</protein>
<reference key="1">
    <citation type="journal article" date="1993" name="J. Bacteriol.">
        <title>Isolation of the gene (miaE) encoding the hydroxylase involved in the synthesis of 2-methylthio-cis-ribozeatin in tRNA of Salmonella typhimurium and characterization of mutants.</title>
        <authorList>
            <person name="Persson B.C."/>
            <person name="Bjoerk G.R."/>
        </authorList>
    </citation>
    <scope>NUCLEOTIDE SEQUENCE [GENOMIC DNA]</scope>
    <scope>FUNCTION</scope>
    <scope>CATALYTIC ACTIVITY</scope>
    <scope>PATHWAY</scope>
    <scope>DISRUPTION PHENOTYPE</scope>
    <source>
        <strain>LT2</strain>
    </source>
</reference>
<reference key="2">
    <citation type="journal article" date="2001" name="Nature">
        <title>Complete genome sequence of Salmonella enterica serovar Typhimurium LT2.</title>
        <authorList>
            <person name="McClelland M."/>
            <person name="Sanderson K.E."/>
            <person name="Spieth J."/>
            <person name="Clifton S.W."/>
            <person name="Latreille P."/>
            <person name="Courtney L."/>
            <person name="Porwollik S."/>
            <person name="Ali J."/>
            <person name="Dante M."/>
            <person name="Du F."/>
            <person name="Hou S."/>
            <person name="Layman D."/>
            <person name="Leonard S."/>
            <person name="Nguyen C."/>
            <person name="Scott K."/>
            <person name="Holmes A."/>
            <person name="Grewal N."/>
            <person name="Mulvaney E."/>
            <person name="Ryan E."/>
            <person name="Sun H."/>
            <person name="Florea L."/>
            <person name="Miller W."/>
            <person name="Stoneking T."/>
            <person name="Nhan M."/>
            <person name="Waterston R."/>
            <person name="Wilson R.K."/>
        </authorList>
    </citation>
    <scope>NUCLEOTIDE SEQUENCE [LARGE SCALE GENOMIC DNA]</scope>
    <source>
        <strain>LT2 / SGSC1412 / ATCC 700720</strain>
    </source>
</reference>
<reference key="3">
    <citation type="journal article" date="1998" name="J. Bacteriol.">
        <title>The ms2io6A37 modification of tRNA in Salmonella typhimurium regulates growth on citric acid cycle intermediates.</title>
        <authorList>
            <person name="Persson B.C."/>
            <person name="Olafsson O."/>
            <person name="Lundgren H.K."/>
            <person name="Hederstedt L."/>
            <person name="Bjoerk G.R."/>
        </authorList>
    </citation>
    <scope>FUNCTION</scope>
    <scope>DISRUPTION PHENOTYPE</scope>
</reference>
<reference key="4">
    <citation type="journal article" date="2007" name="Proc. Natl. Acad. Sci. U.S.A.">
        <title>tRNA-modifying MiaE protein from Salmonella typhimurium is a nonheme diiron monooxygenase.</title>
        <authorList>
            <person name="Mathevon C."/>
            <person name="Pierrel F."/>
            <person name="Oddou J.L."/>
            <person name="Garcia-Serres R."/>
            <person name="Blondin G."/>
            <person name="Latour J.M."/>
            <person name="Menage S."/>
            <person name="Gambarelli S."/>
            <person name="Fontecave M."/>
            <person name="Atta M."/>
        </authorList>
    </citation>
    <scope>FUNCTION</scope>
    <scope>CATALYTIC ACTIVITY</scope>
    <scope>COFACTOR</scope>
    <scope>PATHWAY</scope>
    <scope>SUBUNIT</scope>
</reference>
<reference key="5">
    <citation type="journal article" date="2013" name="Biochemistry">
        <title>Peroxide-shunt substrate-specificity for the Salmonella typhimurium O2-dependent tRNA modifying monooxygenase (MiaE).</title>
        <authorList>
            <person name="Corder A.L."/>
            <person name="Subedi B.P."/>
            <person name="Zhang S."/>
            <person name="Dark A.M."/>
            <person name="Foss F.W. Jr."/>
            <person name="Pierce B.S."/>
        </authorList>
    </citation>
    <scope>FUNCTION</scope>
    <scope>CATALYTIC ACTIVITY</scope>
    <scope>COFACTOR</scope>
    <scope>SUBUNIT</scope>
    <source>
        <strain>LT2 / SGSC1412 / ATCC 700720</strain>
    </source>
</reference>
<reference key="6">
    <citation type="journal article" date="2015" name="Biochemistry">
        <title>Steady-state kinetics and spectroscopic characterization of enzyme-tRNA interactions for the non-heme diiron tRNA-monooxygenase, MiaE.</title>
        <authorList>
            <person name="Subedi B.P."/>
            <person name="Corder A.L."/>
            <person name="Zhang S."/>
            <person name="Foss F.W. Jr."/>
            <person name="Pierce B.S."/>
        </authorList>
    </citation>
    <scope>FUNCTION</scope>
    <scope>COFACTOR</scope>
    <scope>DOMAIN</scope>
    <source>
        <strain>LT2 / SGSC1412 / ATCC 700720</strain>
    </source>
</reference>
<gene>
    <name evidence="8" type="primary">miaE</name>
    <name type="ordered locus">STM4471</name>
</gene>
<evidence type="ECO:0000250" key="1">
    <source>
        <dbReference type="UniProtKB" id="Q88KV1"/>
    </source>
</evidence>
<evidence type="ECO:0000269" key="2">
    <source>
    </source>
</evidence>
<evidence type="ECO:0000269" key="3">
    <source>
    </source>
</evidence>
<evidence type="ECO:0000269" key="4">
    <source>
    </source>
</evidence>
<evidence type="ECO:0000269" key="5">
    <source>
    </source>
</evidence>
<evidence type="ECO:0000269" key="6">
    <source>
    </source>
</evidence>
<evidence type="ECO:0000303" key="7">
    <source>
    </source>
</evidence>
<evidence type="ECO:0000303" key="8">
    <source>
    </source>
</evidence>
<evidence type="ECO:0000305" key="9"/>
<organism>
    <name type="scientific">Salmonella typhimurium (strain LT2 / SGSC1412 / ATCC 700720)</name>
    <dbReference type="NCBI Taxonomy" id="99287"/>
    <lineage>
        <taxon>Bacteria</taxon>
        <taxon>Pseudomonadati</taxon>
        <taxon>Pseudomonadota</taxon>
        <taxon>Gammaproteobacteria</taxon>
        <taxon>Enterobacterales</taxon>
        <taxon>Enterobacteriaceae</taxon>
        <taxon>Salmonella</taxon>
    </lineage>
</organism>
<accession>Q08015</accession>
<feature type="chain" id="PRO_0000096480" description="tRNA 2-(methylsulfanyl)-N(6)-isopentenyladenosine(37) hydroxylase">
    <location>
        <begin position="1"/>
        <end position="270"/>
    </location>
</feature>
<feature type="binding site" evidence="1">
    <location>
        <position position="59"/>
    </location>
    <ligand>
        <name>Fe cation</name>
        <dbReference type="ChEBI" id="CHEBI:24875"/>
        <label>1</label>
    </ligand>
</feature>
<feature type="binding site" evidence="1">
    <location>
        <position position="137"/>
    </location>
    <ligand>
        <name>Fe cation</name>
        <dbReference type="ChEBI" id="CHEBI:24875"/>
        <label>1</label>
    </ligand>
</feature>
<feature type="binding site" evidence="1">
    <location>
        <position position="137"/>
    </location>
    <ligand>
        <name>Fe cation</name>
        <dbReference type="ChEBI" id="CHEBI:24875"/>
        <label>2</label>
    </ligand>
</feature>
<feature type="binding site" evidence="1">
    <location>
        <position position="140"/>
    </location>
    <ligand>
        <name>Fe cation</name>
        <dbReference type="ChEBI" id="CHEBI:24875"/>
        <label>1</label>
    </ligand>
</feature>
<feature type="binding site" evidence="1">
    <location>
        <position position="190"/>
    </location>
    <ligand>
        <name>Fe cation</name>
        <dbReference type="ChEBI" id="CHEBI:24875"/>
        <label>2</label>
    </ligand>
</feature>
<feature type="binding site" evidence="1">
    <location>
        <position position="219"/>
    </location>
    <ligand>
        <name>Fe cation</name>
        <dbReference type="ChEBI" id="CHEBI:24875"/>
        <label>2</label>
    </ligand>
</feature>
<feature type="binding site" evidence="1">
    <location>
        <position position="222"/>
    </location>
    <ligand>
        <name>Fe cation</name>
        <dbReference type="ChEBI" id="CHEBI:24875"/>
        <label>2</label>
    </ligand>
</feature>
<keyword id="KW-0408">Iron</keyword>
<keyword id="KW-0479">Metal-binding</keyword>
<keyword id="KW-0503">Monooxygenase</keyword>
<keyword id="KW-0560">Oxidoreductase</keyword>
<keyword id="KW-1185">Reference proteome</keyword>
<keyword id="KW-0819">tRNA processing</keyword>
<dbReference type="EC" id="1.14.99.69" evidence="2 3 5"/>
<dbReference type="EMBL" id="X73368">
    <property type="protein sequence ID" value="CAA51782.1"/>
    <property type="molecule type" value="Genomic_DNA"/>
</dbReference>
<dbReference type="EMBL" id="AE006468">
    <property type="protein sequence ID" value="AAL23290.1"/>
    <property type="molecule type" value="Genomic_DNA"/>
</dbReference>
<dbReference type="PIR" id="S34361">
    <property type="entry name" value="S34361"/>
</dbReference>
<dbReference type="RefSeq" id="NP_463331.1">
    <property type="nucleotide sequence ID" value="NC_003197.2"/>
</dbReference>
<dbReference type="RefSeq" id="WP_000218459.1">
    <property type="nucleotide sequence ID" value="NC_003197.2"/>
</dbReference>
<dbReference type="SMR" id="Q08015"/>
<dbReference type="STRING" id="99287.STM4471"/>
<dbReference type="PaxDb" id="99287-STM4471"/>
<dbReference type="GeneID" id="1255997"/>
<dbReference type="KEGG" id="stm:STM4471"/>
<dbReference type="PATRIC" id="fig|99287.12.peg.4706"/>
<dbReference type="HOGENOM" id="CLU_056571_0_0_6"/>
<dbReference type="OMA" id="DHAHCEK"/>
<dbReference type="PhylomeDB" id="Q08015"/>
<dbReference type="BioCyc" id="MetaCyc:STM4471-MONOMER"/>
<dbReference type="BioCyc" id="SENT99287:STM4471-MONOMER"/>
<dbReference type="BRENDA" id="1.14.99.69">
    <property type="organism ID" value="5542"/>
</dbReference>
<dbReference type="UniPathway" id="UPA00729"/>
<dbReference type="Proteomes" id="UP000001014">
    <property type="component" value="Chromosome"/>
</dbReference>
<dbReference type="GO" id="GO:0046872">
    <property type="term" value="F:metal ion binding"/>
    <property type="evidence" value="ECO:0007669"/>
    <property type="project" value="UniProtKB-KW"/>
</dbReference>
<dbReference type="GO" id="GO:0004497">
    <property type="term" value="F:monooxygenase activity"/>
    <property type="evidence" value="ECO:0007669"/>
    <property type="project" value="UniProtKB-KW"/>
</dbReference>
<dbReference type="GO" id="GO:0045301">
    <property type="term" value="F:tRNA 2-(methylsulfanyl)-N(6)-isopentenyladenosine(37) hydroxylase activity"/>
    <property type="evidence" value="ECO:0007669"/>
    <property type="project" value="InterPro"/>
</dbReference>
<dbReference type="GO" id="GO:0006400">
    <property type="term" value="P:tRNA modification"/>
    <property type="evidence" value="ECO:0007669"/>
    <property type="project" value="InterPro"/>
</dbReference>
<dbReference type="CDD" id="cd07910">
    <property type="entry name" value="MiaE"/>
    <property type="match status" value="1"/>
</dbReference>
<dbReference type="Gene3D" id="1.20.1260.10">
    <property type="match status" value="1"/>
</dbReference>
<dbReference type="InterPro" id="IPR012347">
    <property type="entry name" value="Ferritin-like"/>
</dbReference>
<dbReference type="InterPro" id="IPR009078">
    <property type="entry name" value="Ferritin-like_SF"/>
</dbReference>
<dbReference type="InterPro" id="IPR010386">
    <property type="entry name" value="tRNA-Hydrxlase_MiaE"/>
</dbReference>
<dbReference type="NCBIfam" id="NF047790">
    <property type="entry name" value="tRNAmsioHdxaseMiaE"/>
    <property type="match status" value="1"/>
</dbReference>
<dbReference type="PANTHER" id="PTHR42637:SF1">
    <property type="entry name" value="TRNA 2-(METHYLSULFANYL)-N(6)-ISOPENTENYLADENOSINE(37) HYDROXYLASE"/>
    <property type="match status" value="1"/>
</dbReference>
<dbReference type="PANTHER" id="PTHR42637">
    <property type="entry name" value="TRNA-(MS[2]IO[6]A)-HYDROXYLASE"/>
    <property type="match status" value="1"/>
</dbReference>
<dbReference type="Pfam" id="PF06175">
    <property type="entry name" value="MiaE"/>
    <property type="match status" value="1"/>
</dbReference>
<dbReference type="PIRSF" id="PIRSF020736">
    <property type="entry name" value="MiaE"/>
    <property type="match status" value="1"/>
</dbReference>
<dbReference type="SUPFAM" id="SSF47240">
    <property type="entry name" value="Ferritin-like"/>
    <property type="match status" value="1"/>
</dbReference>
<sequence>MTVRQRLLSYFFNRLRMNYPQILSPVLNFLHCPTPQAWIVQARDPQNLPLLLTDHLICELKAAQTALLLVRKYVADKSGADALLSWLQPYEAFAFRQGPEPDFVALHKQISKSAMPQTDDPWGRQLIDRMVLLIKEELHHFWQVREVMQARNIPYVKITASRYAKGMLKAVRTHEPLTLIDKLICGAYIEARSCERFAALAPWLDEDLQTFYLSLLRSEARHYQDYLALAQQISAEDISARVRYFGEVEADLILSPDREFRFHSGVPAAG</sequence>
<comment type="function">
    <text evidence="2 3 4 5 6">Involved in specific tRNA modification. Catalyzes the oxygen-dependent hydroxylation of 2-methylthio-N-6-isopentenyl adenosine (ms2i6A) to produce 2-methylthio-N-6-(cis-hydroxy)isopentenyl adenosine (ms2io6A) at position 37 in tRNAs (PubMed:17679698, PubMed:23906247, PubMed:8253666). Can also use N6-(dimethylallyl)adenosine (i6A) as substrate, with lower efficiency (PubMed:23906247, PubMed:25453905). The presence of the hydroxyl group on the tRNA may regulate the ability of S.typhimurium to grow on the citric acid cycle (CAC) intermediates succinate, fumarate and malate (PubMed:9620964).</text>
</comment>
<comment type="catalytic activity">
    <reaction evidence="2 3 5">
        <text>2-methylsulfanyl-N(6)-dimethylallyladenosine(37) in tRNA + AH2 + O2 = N(6)-[(2E)-4-hydroxy-3-methylbut-2-en-1-yl]-2-(methylsulfanyl)adenosine(37) in tRNA + A + H2O</text>
        <dbReference type="Rhea" id="RHEA:65812"/>
        <dbReference type="Rhea" id="RHEA-COMP:10376"/>
        <dbReference type="Rhea" id="RHEA-COMP:17048"/>
        <dbReference type="ChEBI" id="CHEBI:13193"/>
        <dbReference type="ChEBI" id="CHEBI:15377"/>
        <dbReference type="ChEBI" id="CHEBI:15379"/>
        <dbReference type="ChEBI" id="CHEBI:17499"/>
        <dbReference type="ChEBI" id="CHEBI:74417"/>
        <dbReference type="ChEBI" id="CHEBI:157739"/>
        <dbReference type="EC" id="1.14.99.69"/>
    </reaction>
    <physiologicalReaction direction="left-to-right" evidence="2 3 5">
        <dbReference type="Rhea" id="RHEA:65813"/>
    </physiologicalReaction>
</comment>
<comment type="cofactor">
    <cofactor evidence="2 3 4">
        <name>Fe cation</name>
        <dbReference type="ChEBI" id="CHEBI:24875"/>
    </cofactor>
    <text evidence="2 3 4">Contains a nonheme dinuclear iron cluster (PubMed:17679698, PubMed:23906247, PubMed:25453905). Contains three different forms of the dinuclear site: an hydroxo-bridged FeIII-OH-FeIII center, an oxo-bridged FeIII-O-FeIII center and an hydroxo-bridged FeII-OH-FeIII mixed-valent center (PubMed:17679698).</text>
</comment>
<comment type="pathway">
    <text evidence="2 5">tRNA modification; 2-methylthio-N-6-(cis-hydroxy)isopentenyl adenosine-tRNA biosynthesis.</text>
</comment>
<comment type="subunit">
    <text evidence="2 3">Monomer.</text>
</comment>
<comment type="domain">
    <text evidence="4">Binding of tRNA to MiaE induces a protein conformational change that influences the electronic structure of the diiron site.</text>
</comment>
<comment type="disruption phenotype">
    <text evidence="5 6">Disruption mutant shows normal growth characteristics after being shifted from anaerobic to aerobic conditions (PubMed:8253666). Mutant shows slower growth on citrate and acetate, and is unable to grow on the citric acid cycle intermediates succinate, fumarate and malate (PubMed:8253666, PubMed:9620964).</text>
</comment>
<comment type="similarity">
    <text evidence="9">Belongs to the MiaE family.</text>
</comment>
<comment type="caution">
    <text evidence="9">It is uncertain whether Met-1 or Met-17 is the initiator.</text>
</comment>
<proteinExistence type="evidence at protein level"/>
<name>MIAE_SALTY</name>